<dbReference type="EC" id="2.3.2.27" evidence="6"/>
<dbReference type="EMBL" id="AK173009">
    <property type="protein sequence ID" value="BAD32287.1"/>
    <property type="status" value="ALT_INIT"/>
    <property type="molecule type" value="mRNA"/>
</dbReference>
<dbReference type="EMBL" id="AC140319">
    <property type="status" value="NOT_ANNOTATED_CDS"/>
    <property type="molecule type" value="Genomic_DNA"/>
</dbReference>
<dbReference type="EMBL" id="AK036725">
    <property type="protein sequence ID" value="BAC29552.1"/>
    <property type="molecule type" value="mRNA"/>
</dbReference>
<dbReference type="EMBL" id="BC027795">
    <property type="protein sequence ID" value="AAH27795.1"/>
    <property type="status" value="ALT_INIT"/>
    <property type="molecule type" value="mRNA"/>
</dbReference>
<dbReference type="CCDS" id="CCDS37382.1"/>
<dbReference type="RefSeq" id="NP_001074537.1">
    <property type="nucleotide sequence ID" value="NM_001081068.2"/>
</dbReference>
<dbReference type="SMR" id="Q6A009"/>
<dbReference type="BioGRID" id="219701">
    <property type="interactions" value="3"/>
</dbReference>
<dbReference type="DIP" id="DIP-48713N"/>
<dbReference type="FunCoup" id="Q6A009">
    <property type="interactions" value="3622"/>
</dbReference>
<dbReference type="IntAct" id="Q6A009">
    <property type="interactions" value="2"/>
</dbReference>
<dbReference type="MINT" id="Q6A009"/>
<dbReference type="STRING" id="10090.ENSMUSP00000038775"/>
<dbReference type="GlyGen" id="Q6A009">
    <property type="glycosylation" value="1 site, 1 N-linked glycan (1 site)"/>
</dbReference>
<dbReference type="iPTMnet" id="Q6A009"/>
<dbReference type="PhosphoSitePlus" id="Q6A009"/>
<dbReference type="SwissPalm" id="Q6A009"/>
<dbReference type="PaxDb" id="10090-ENSMUSP00000038775"/>
<dbReference type="PeptideAtlas" id="Q6A009"/>
<dbReference type="ProteomicsDB" id="293411"/>
<dbReference type="Pumba" id="Q6A009"/>
<dbReference type="Antibodypedia" id="41917">
    <property type="antibodies" value="122 antibodies from 20 providers"/>
</dbReference>
<dbReference type="Ensembl" id="ENSMUST00000039449.9">
    <property type="protein sequence ID" value="ENSMUSP00000038775.8"/>
    <property type="gene ID" value="ENSMUSG00000052299.10"/>
</dbReference>
<dbReference type="GeneID" id="78913"/>
<dbReference type="KEGG" id="mmu:78913"/>
<dbReference type="UCSC" id="uc033gzo.1">
    <property type="organism name" value="mouse"/>
</dbReference>
<dbReference type="AGR" id="MGI:1926163"/>
<dbReference type="CTD" id="26046"/>
<dbReference type="MGI" id="MGI:1926163">
    <property type="gene designation" value="Ltn1"/>
</dbReference>
<dbReference type="VEuPathDB" id="HostDB:ENSMUSG00000052299"/>
<dbReference type="eggNOG" id="KOG0803">
    <property type="taxonomic scope" value="Eukaryota"/>
</dbReference>
<dbReference type="GeneTree" id="ENSGT00390000016055"/>
<dbReference type="HOGENOM" id="CLU_002412_0_0_1"/>
<dbReference type="InParanoid" id="Q6A009"/>
<dbReference type="OMA" id="IYGSHWE"/>
<dbReference type="OrthoDB" id="6108at2759"/>
<dbReference type="PhylomeDB" id="Q6A009"/>
<dbReference type="TreeFam" id="TF314286"/>
<dbReference type="Reactome" id="R-MMU-983168">
    <property type="pathway name" value="Antigen processing: Ubiquitination &amp; Proteasome degradation"/>
</dbReference>
<dbReference type="UniPathway" id="UPA00143"/>
<dbReference type="BioGRID-ORCS" id="78913">
    <property type="hits" value="8 hits in 78 CRISPR screens"/>
</dbReference>
<dbReference type="ChiTaRS" id="Ltn1">
    <property type="organism name" value="mouse"/>
</dbReference>
<dbReference type="PRO" id="PR:Q6A009"/>
<dbReference type="Proteomes" id="UP000000589">
    <property type="component" value="Chromosome 16"/>
</dbReference>
<dbReference type="RNAct" id="Q6A009">
    <property type="molecule type" value="protein"/>
</dbReference>
<dbReference type="Bgee" id="ENSMUSG00000052299">
    <property type="expression patterns" value="Expressed in cumulus cell and 258 other cell types or tissues"/>
</dbReference>
<dbReference type="ExpressionAtlas" id="Q6A009">
    <property type="expression patterns" value="baseline and differential"/>
</dbReference>
<dbReference type="GO" id="GO:0005829">
    <property type="term" value="C:cytosol"/>
    <property type="evidence" value="ECO:0000250"/>
    <property type="project" value="UniProtKB"/>
</dbReference>
<dbReference type="GO" id="GO:0022626">
    <property type="term" value="C:cytosolic ribosome"/>
    <property type="evidence" value="ECO:0007669"/>
    <property type="project" value="Ensembl"/>
</dbReference>
<dbReference type="GO" id="GO:1990112">
    <property type="term" value="C:RQC complex"/>
    <property type="evidence" value="ECO:0000250"/>
    <property type="project" value="UniProtKB"/>
</dbReference>
<dbReference type="GO" id="GO:0061630">
    <property type="term" value="F:ubiquitin protein ligase activity"/>
    <property type="evidence" value="ECO:0000314"/>
    <property type="project" value="MGI"/>
</dbReference>
<dbReference type="GO" id="GO:0004842">
    <property type="term" value="F:ubiquitin-protein transferase activity"/>
    <property type="evidence" value="ECO:0000314"/>
    <property type="project" value="UniProtKB"/>
</dbReference>
<dbReference type="GO" id="GO:0008270">
    <property type="term" value="F:zinc ion binding"/>
    <property type="evidence" value="ECO:0007669"/>
    <property type="project" value="UniProtKB-KW"/>
</dbReference>
<dbReference type="GO" id="GO:0051865">
    <property type="term" value="P:protein autoubiquitination"/>
    <property type="evidence" value="ECO:0000314"/>
    <property type="project" value="UniProtKB"/>
</dbReference>
<dbReference type="GO" id="GO:0072344">
    <property type="term" value="P:rescue of stalled ribosome"/>
    <property type="evidence" value="ECO:0007669"/>
    <property type="project" value="Ensembl"/>
</dbReference>
<dbReference type="GO" id="GO:1990116">
    <property type="term" value="P:ribosome-associated ubiquitin-dependent protein catabolic process"/>
    <property type="evidence" value="ECO:0000250"/>
    <property type="project" value="UniProtKB"/>
</dbReference>
<dbReference type="CDD" id="cd16491">
    <property type="entry name" value="RING-CH-C4HC3_LTN1"/>
    <property type="match status" value="1"/>
</dbReference>
<dbReference type="FunFam" id="3.30.40.10:FF:000038">
    <property type="entry name" value="E3 ubiquitin-protein ligase listerin"/>
    <property type="match status" value="1"/>
</dbReference>
<dbReference type="FunFam" id="1.25.10.10:FF:001251">
    <property type="entry name" value="Predicted protein"/>
    <property type="match status" value="1"/>
</dbReference>
<dbReference type="Gene3D" id="1.25.10.10">
    <property type="entry name" value="Leucine-rich Repeat Variant"/>
    <property type="match status" value="1"/>
</dbReference>
<dbReference type="Gene3D" id="3.30.40.10">
    <property type="entry name" value="Zinc/RING finger domain, C3HC4 (zinc finger)"/>
    <property type="match status" value="1"/>
</dbReference>
<dbReference type="InterPro" id="IPR011989">
    <property type="entry name" value="ARM-like"/>
</dbReference>
<dbReference type="InterPro" id="IPR016024">
    <property type="entry name" value="ARM-type_fold"/>
</dbReference>
<dbReference type="InterPro" id="IPR039795">
    <property type="entry name" value="LTN1/Rkr1"/>
</dbReference>
<dbReference type="InterPro" id="IPR054477">
    <property type="entry name" value="LTN1_E3_ligase_6th"/>
</dbReference>
<dbReference type="InterPro" id="IPR056241">
    <property type="entry name" value="LTN1_HEAT_5th"/>
</dbReference>
<dbReference type="InterPro" id="IPR054476">
    <property type="entry name" value="Ltn1_N"/>
</dbReference>
<dbReference type="InterPro" id="IPR054478">
    <property type="entry name" value="LTN1_UBC"/>
</dbReference>
<dbReference type="InterPro" id="IPR039804">
    <property type="entry name" value="RING-CH-C4HC3_LTN1"/>
</dbReference>
<dbReference type="InterPro" id="IPR001841">
    <property type="entry name" value="Znf_RING"/>
</dbReference>
<dbReference type="InterPro" id="IPR011016">
    <property type="entry name" value="Znf_RING-CH"/>
</dbReference>
<dbReference type="InterPro" id="IPR013083">
    <property type="entry name" value="Znf_RING/FYVE/PHD"/>
</dbReference>
<dbReference type="PANTHER" id="PTHR12389:SF0">
    <property type="entry name" value="E3 UBIQUITIN-PROTEIN LIGASE LISTERIN"/>
    <property type="match status" value="1"/>
</dbReference>
<dbReference type="PANTHER" id="PTHR12389">
    <property type="entry name" value="ZINC FINGER PROTEIN 294"/>
    <property type="match status" value="1"/>
</dbReference>
<dbReference type="Pfam" id="PF22958">
    <property type="entry name" value="Ltn1_1st"/>
    <property type="match status" value="1"/>
</dbReference>
<dbReference type="Pfam" id="PF24618">
    <property type="entry name" value="LTN1_E3_ligase_5th"/>
    <property type="match status" value="1"/>
</dbReference>
<dbReference type="Pfam" id="PF22999">
    <property type="entry name" value="LTN1_E3_ligase_6th"/>
    <property type="match status" value="1"/>
</dbReference>
<dbReference type="Pfam" id="PF23009">
    <property type="entry name" value="UBC_like"/>
    <property type="match status" value="1"/>
</dbReference>
<dbReference type="SMART" id="SM00744">
    <property type="entry name" value="RINGv"/>
    <property type="match status" value="1"/>
</dbReference>
<dbReference type="SUPFAM" id="SSF48371">
    <property type="entry name" value="ARM repeat"/>
    <property type="match status" value="1"/>
</dbReference>
<dbReference type="SUPFAM" id="SSF57850">
    <property type="entry name" value="RING/U-box"/>
    <property type="match status" value="1"/>
</dbReference>
<dbReference type="PROSITE" id="PS50089">
    <property type="entry name" value="ZF_RING_2"/>
    <property type="match status" value="1"/>
</dbReference>
<sequence length="1767" mass="198921">MGGKNKQRTKGNLRPSNSGRAAELLAKEQGTVPGFIGFGTSHSDLGYVPAVQGAEDIDSLVDSDFRMVLRKLSKKDVTTKLKAMQEFGIMCTERDTEAVKGVLPYWPRIFCKISLDHDRRVREATQQAFEKLILKVKKHLAPYLKSVMGYWLMAQCDTYPPAALAAKDAFEAAFPPSKQPEAIAFCKEEITTVLQDHLLKETPDTLSDPQTVPEEEREAKFHRVVTCSLLALKRLLCFLPNNELDSLEEKFKSLLSQNKFWKYGKHSVPQVRSAYFELVSALCQHVPQVMKEEAAKVSPSVLLSIDDSDPVVCPALWEAVLYTLTTIEDCWFHVNAKKSVFPKLMAMIREGGRGLAAVMYPYLLPFISKLPQSITEPKLDFFKNFLTSLVTGLSTERTKSSSSECSAVISAFFECLRFIMQQNLGEEEMVQMLINEQLIPFIDTVLKDSGLHHGPMFDHLADTLSSWEAKADAERDPGAVYNLENVLLSFWGRLSEICTEKIRQPEADVKSVLCVSSLVGVLQRPRSSLKLHRKKTAQVRFAINIPEAHKGDEKSMSSEGENSEGSDGGAQSPLSNTSSDLVSPLRKKPLEDLVCKLAEVSISFVNERKSEQHLQFLSTLLDSFSSVQVFNILLSDKQKNVVKAKPLEITKLAEKNPAVKFLYHKLIGWLNDSQKEDGGFLVDILYSALRCCDSGVERKEVLDDLTKEDLKWSSLLQVIEKACSSSDKHALVTPWLKGSILGEKLVALADCLCDKDLEATTSESHSSEQWSLLRLALSQHVKNDYLIGEVYVGRIIVKLHETLSKTKDLSEAANSDSSVSFVCDVVHSFFSSAGGGLLMPPSEDLLLTLFQLCAQSKERTHLPDFLICKLKNTLLSGVNLLVHQTASTYEQSTFLRLSVLWLKDQVQSSALDNTSLQVLLSAAGDLLGTLVESEDTSLLGVYIGSVMPSDSEWEKMRQALPVQWLHRPLLEGRLSLNYECFKTDFKEQDTKTLPNHLCTSSLLSKMILVAQKKKLVLEDNVLEKIIAELLYSLQWCEELDNAPSFLSGFCGILQKMNITYSNLSVLSETSSLLQLLFDRSRKNGTLWSLIIAKLILSRSISSDEVKPYYKRKESFFPLTEGSLHTIQSLCPFLSKEEKKEFSAQCIPAFLGWTKEDLCSINGAFGHLAIFNSCLQTRSIDDKQLLHGILKIITSWRKQHEDIFLFSCNLSEASPEVLGLNIEIMRFLSLFLKHCAYPLPLADSEWDFIMCSMLAWLETTSENQALYSVPLVQLFACVSFDLACDLCAFFDSITPDIVDNLPVNLISEWKEFFSKGIHSLLLPLLVNAIGENKDLSETSFQNAMLKPMCETLTYISKDQLLSHKLPARLVASQKTNLPEHLQTLLNTLTPLLLFRARPVQIAAYHMLCKLMPELPQHDQDNLRSYGDEEEEPALSPPAALMSLLSSQEELLENVLGCVPVGQIVTVKPLSEDFCYVLGYLLTWKLILTFFKAASSQLRALYSMYLRKTKSLNKLLYHLFRLMPENPTYGETAIEVSSKDPKTFFTEEVQLSIRETATLPYHIPHLACSVYHMTLKDLPAMVRLWWNSSEKRVFNIVDRFTSKYVSNVLSFQEISSVQTSTQLFNGMTVKARATTREVMATYTIEDIVIELIIQLPSNYPLGSITVESGKRIGVAVQQWRNWMLQLSTYLTHQNGSIMEGLALWKNNVDKRFEGVEDCMICFSVIHGFNYSLPKKACRTCKKKFHSACLYKWFTSSNKSTCPLCRETFF</sequence>
<keyword id="KW-0963">Cytoplasm</keyword>
<keyword id="KW-0479">Metal-binding</keyword>
<keyword id="KW-0523">Neurodegeneration</keyword>
<keyword id="KW-1185">Reference proteome</keyword>
<keyword id="KW-0677">Repeat</keyword>
<keyword id="KW-0808">Transferase</keyword>
<keyword id="KW-0832">Ubl conjugation</keyword>
<keyword id="KW-0833">Ubl conjugation pathway</keyword>
<keyword id="KW-0862">Zinc</keyword>
<keyword id="KW-0863">Zinc-finger</keyword>
<feature type="chain" id="PRO_0000056305" description="E3 ubiquitin-protein ligase listerin">
    <location>
        <begin position="1"/>
        <end position="1767"/>
    </location>
</feature>
<feature type="repeat" description="HEAT 1" evidence="3">
    <location>
        <begin position="59"/>
        <end position="96"/>
    </location>
</feature>
<feature type="repeat" description="HEAT 2" evidence="3">
    <location>
        <begin position="100"/>
        <end position="138"/>
    </location>
</feature>
<feature type="repeat" description="HEAT 3" evidence="3">
    <location>
        <begin position="273"/>
        <end position="314"/>
    </location>
</feature>
<feature type="repeat" description="HEAT 4" evidence="3">
    <location>
        <begin position="335"/>
        <end position="372"/>
    </location>
</feature>
<feature type="repeat" description="HEAT 5" evidence="3">
    <location>
        <begin position="380"/>
        <end position="418"/>
    </location>
</feature>
<feature type="repeat" description="HEAT 6" evidence="3">
    <location>
        <begin position="433"/>
        <end position="473"/>
    </location>
</feature>
<feature type="repeat" description="HEAT 7" evidence="3">
    <location>
        <begin position="509"/>
        <end position="547"/>
    </location>
</feature>
<feature type="repeat" description="HEAT 8" evidence="3">
    <location>
        <begin position="621"/>
        <end position="658"/>
    </location>
</feature>
<feature type="repeat" description="HEAT 9" evidence="3">
    <location>
        <begin position="676"/>
        <end position="714"/>
    </location>
</feature>
<feature type="repeat" description="HEAT 10" evidence="3">
    <location>
        <begin position="1067"/>
        <end position="1104"/>
    </location>
</feature>
<feature type="repeat" description="HEAT 11" evidence="3">
    <location>
        <begin position="1183"/>
        <end position="1226"/>
    </location>
</feature>
<feature type="repeat" description="HEAT 12" evidence="3">
    <location>
        <begin position="1315"/>
        <end position="1353"/>
    </location>
</feature>
<feature type="repeat" description="HEAT 13" evidence="3">
    <location>
        <begin position="1378"/>
        <end position="1415"/>
    </location>
</feature>
<feature type="repeat" description="HEAT 14" evidence="3">
    <location>
        <begin position="1476"/>
        <end position="1513"/>
    </location>
</feature>
<feature type="zinc finger region" description="RING-type" evidence="4">
    <location>
        <begin position="1716"/>
        <end position="1763"/>
    </location>
</feature>
<feature type="region of interest" description="Disordered" evidence="5">
    <location>
        <begin position="550"/>
        <end position="583"/>
    </location>
</feature>
<feature type="compositionally biased region" description="Polar residues" evidence="5">
    <location>
        <begin position="572"/>
        <end position="581"/>
    </location>
</feature>
<feature type="sequence conflict" description="In Ref. 1; BAD32287." evidence="7" ref="1">
    <original>VAQ</original>
    <variation>IAP</variation>
    <location>
        <begin position="1009"/>
        <end position="1011"/>
    </location>
</feature>
<feature type="sequence conflict" description="In Ref. 1; BAD32287." evidence="7" ref="1">
    <original>A</original>
    <variation>P</variation>
    <location>
        <position position="1042"/>
    </location>
</feature>
<proteinExistence type="evidence at protein level"/>
<comment type="function">
    <text evidence="1 2 6">E3 ubiquitin-protein ligase (PubMed:19196968). component of the ribosome quality control complex (RQC), a ribosome-associated complex that mediates ubiquitination and extraction of incompletely synthesized nascent chains for proteasomal degradation (By similarity). Within the RQC complex, LTN1 is recruited to stalled 60S ribosomal subunits by NEMF and mediates ubiquitination of stalled nascent chains (By similarity). Ubiquitination leads to VCP/p97 recruitment for extraction and degradation of the incomplete translation product (By similarity).</text>
</comment>
<comment type="catalytic activity">
    <reaction evidence="6">
        <text>S-ubiquitinyl-[E2 ubiquitin-conjugating enzyme]-L-cysteine + [acceptor protein]-L-lysine = [E2 ubiquitin-conjugating enzyme]-L-cysteine + N(6)-ubiquitinyl-[acceptor protein]-L-lysine.</text>
        <dbReference type="EC" id="2.3.2.27"/>
    </reaction>
</comment>
<comment type="pathway">
    <text evidence="6">Protein modification; protein ubiquitination.</text>
</comment>
<comment type="subunit">
    <text evidence="1 2">Component of the ribosome quality control complex (RQC), composed of at least the E3 ubiquitin ligase LTN1 and NEMF associated with the 60S ribosomal subunit. The complex probably also contains TCF25 as well as VCP/p97 and its ubiquitin-binding cofactors.</text>
</comment>
<comment type="subcellular location">
    <subcellularLocation>
        <location evidence="1">Cytoplasm</location>
        <location evidence="1">Cytosol</location>
    </subcellularLocation>
</comment>
<comment type="tissue specificity">
    <text evidence="6">Widely expressed, including in the brain and spinal cord.</text>
</comment>
<comment type="PTM">
    <text evidence="6">Autoubiquitinated.</text>
</comment>
<comment type="disruption phenotype">
    <text evidence="6">Embryonic lethality. Mice with a milder mutant caused by an internal in-frame deletion of exon 11, producing a 14-amino acid deletion prior to the RING-type zinc finger, display profound early-onset and progressive neurological and motor dysfunction.</text>
</comment>
<comment type="miscellaneous">
    <text evidence="8">Was named listerin because of the 'tilting' or 'listing' phenotype observed in mutant mice.</text>
</comment>
<comment type="similarity">
    <text evidence="7">Belongs to the LTN1 family.</text>
</comment>
<comment type="sequence caution" evidence="7">
    <conflict type="erroneous initiation">
        <sequence resource="EMBL-CDS" id="AAH27795"/>
    </conflict>
    <text>Extended N-terminus.</text>
</comment>
<comment type="sequence caution" evidence="7">
    <conflict type="erroneous initiation">
        <sequence resource="EMBL-CDS" id="BAD32287"/>
    </conflict>
    <text>Extended N-terminus.</text>
</comment>
<gene>
    <name type="primary">Ltn1</name>
    <name type="synonym">Kiaa0714</name>
    <name type="synonym">Lister</name>
    <name type="synonym">Rnf160</name>
    <name type="synonym">Zfp294</name>
    <name type="synonym">Znf294</name>
</gene>
<reference key="1">
    <citation type="journal article" date="2004" name="DNA Res.">
        <title>Prediction of the coding sequences of mouse homologues of KIAA gene: IV. The complete nucleotide sequences of 500 mouse KIAA-homologous cDNAs identified by screening of terminal sequences of cDNA clones randomly sampled from size-fractionated libraries.</title>
        <authorList>
            <person name="Okazaki N."/>
            <person name="Kikuno R."/>
            <person name="Ohara R."/>
            <person name="Inamoto S."/>
            <person name="Koseki H."/>
            <person name="Hiraoka S."/>
            <person name="Saga Y."/>
            <person name="Seino S."/>
            <person name="Nishimura M."/>
            <person name="Kaisho T."/>
            <person name="Hoshino K."/>
            <person name="Kitamura H."/>
            <person name="Nagase T."/>
            <person name="Ohara O."/>
            <person name="Koga H."/>
        </authorList>
    </citation>
    <scope>NUCLEOTIDE SEQUENCE [LARGE SCALE MRNA]</scope>
    <source>
        <tissue>Fetal brain</tissue>
    </source>
</reference>
<reference key="2">
    <citation type="journal article" date="2009" name="PLoS Biol.">
        <title>Lineage-specific biology revealed by a finished genome assembly of the mouse.</title>
        <authorList>
            <person name="Church D.M."/>
            <person name="Goodstadt L."/>
            <person name="Hillier L.W."/>
            <person name="Zody M.C."/>
            <person name="Goldstein S."/>
            <person name="She X."/>
            <person name="Bult C.J."/>
            <person name="Agarwala R."/>
            <person name="Cherry J.L."/>
            <person name="DiCuccio M."/>
            <person name="Hlavina W."/>
            <person name="Kapustin Y."/>
            <person name="Meric P."/>
            <person name="Maglott D."/>
            <person name="Birtle Z."/>
            <person name="Marques A.C."/>
            <person name="Graves T."/>
            <person name="Zhou S."/>
            <person name="Teague B."/>
            <person name="Potamousis K."/>
            <person name="Churas C."/>
            <person name="Place M."/>
            <person name="Herschleb J."/>
            <person name="Runnheim R."/>
            <person name="Forrest D."/>
            <person name="Amos-Landgraf J."/>
            <person name="Schwartz D.C."/>
            <person name="Cheng Z."/>
            <person name="Lindblad-Toh K."/>
            <person name="Eichler E.E."/>
            <person name="Ponting C.P."/>
        </authorList>
    </citation>
    <scope>NUCLEOTIDE SEQUENCE [LARGE SCALE GENOMIC DNA]</scope>
    <source>
        <strain>C57BL/6J</strain>
    </source>
</reference>
<reference key="3">
    <citation type="journal article" date="2005" name="Science">
        <title>The transcriptional landscape of the mammalian genome.</title>
        <authorList>
            <person name="Carninci P."/>
            <person name="Kasukawa T."/>
            <person name="Katayama S."/>
            <person name="Gough J."/>
            <person name="Frith M.C."/>
            <person name="Maeda N."/>
            <person name="Oyama R."/>
            <person name="Ravasi T."/>
            <person name="Lenhard B."/>
            <person name="Wells C."/>
            <person name="Kodzius R."/>
            <person name="Shimokawa K."/>
            <person name="Bajic V.B."/>
            <person name="Brenner S.E."/>
            <person name="Batalov S."/>
            <person name="Forrest A.R."/>
            <person name="Zavolan M."/>
            <person name="Davis M.J."/>
            <person name="Wilming L.G."/>
            <person name="Aidinis V."/>
            <person name="Allen J.E."/>
            <person name="Ambesi-Impiombato A."/>
            <person name="Apweiler R."/>
            <person name="Aturaliya R.N."/>
            <person name="Bailey T.L."/>
            <person name="Bansal M."/>
            <person name="Baxter L."/>
            <person name="Beisel K.W."/>
            <person name="Bersano T."/>
            <person name="Bono H."/>
            <person name="Chalk A.M."/>
            <person name="Chiu K.P."/>
            <person name="Choudhary V."/>
            <person name="Christoffels A."/>
            <person name="Clutterbuck D.R."/>
            <person name="Crowe M.L."/>
            <person name="Dalla E."/>
            <person name="Dalrymple B.P."/>
            <person name="de Bono B."/>
            <person name="Della Gatta G."/>
            <person name="di Bernardo D."/>
            <person name="Down T."/>
            <person name="Engstrom P."/>
            <person name="Fagiolini M."/>
            <person name="Faulkner G."/>
            <person name="Fletcher C.F."/>
            <person name="Fukushima T."/>
            <person name="Furuno M."/>
            <person name="Futaki S."/>
            <person name="Gariboldi M."/>
            <person name="Georgii-Hemming P."/>
            <person name="Gingeras T.R."/>
            <person name="Gojobori T."/>
            <person name="Green R.E."/>
            <person name="Gustincich S."/>
            <person name="Harbers M."/>
            <person name="Hayashi Y."/>
            <person name="Hensch T.K."/>
            <person name="Hirokawa N."/>
            <person name="Hill D."/>
            <person name="Huminiecki L."/>
            <person name="Iacono M."/>
            <person name="Ikeo K."/>
            <person name="Iwama A."/>
            <person name="Ishikawa T."/>
            <person name="Jakt M."/>
            <person name="Kanapin A."/>
            <person name="Katoh M."/>
            <person name="Kawasawa Y."/>
            <person name="Kelso J."/>
            <person name="Kitamura H."/>
            <person name="Kitano H."/>
            <person name="Kollias G."/>
            <person name="Krishnan S.P."/>
            <person name="Kruger A."/>
            <person name="Kummerfeld S.K."/>
            <person name="Kurochkin I.V."/>
            <person name="Lareau L.F."/>
            <person name="Lazarevic D."/>
            <person name="Lipovich L."/>
            <person name="Liu J."/>
            <person name="Liuni S."/>
            <person name="McWilliam S."/>
            <person name="Madan Babu M."/>
            <person name="Madera M."/>
            <person name="Marchionni L."/>
            <person name="Matsuda H."/>
            <person name="Matsuzawa S."/>
            <person name="Miki H."/>
            <person name="Mignone F."/>
            <person name="Miyake S."/>
            <person name="Morris K."/>
            <person name="Mottagui-Tabar S."/>
            <person name="Mulder N."/>
            <person name="Nakano N."/>
            <person name="Nakauchi H."/>
            <person name="Ng P."/>
            <person name="Nilsson R."/>
            <person name="Nishiguchi S."/>
            <person name="Nishikawa S."/>
            <person name="Nori F."/>
            <person name="Ohara O."/>
            <person name="Okazaki Y."/>
            <person name="Orlando V."/>
            <person name="Pang K.C."/>
            <person name="Pavan W.J."/>
            <person name="Pavesi G."/>
            <person name="Pesole G."/>
            <person name="Petrovsky N."/>
            <person name="Piazza S."/>
            <person name="Reed J."/>
            <person name="Reid J.F."/>
            <person name="Ring B.Z."/>
            <person name="Ringwald M."/>
            <person name="Rost B."/>
            <person name="Ruan Y."/>
            <person name="Salzberg S.L."/>
            <person name="Sandelin A."/>
            <person name="Schneider C."/>
            <person name="Schoenbach C."/>
            <person name="Sekiguchi K."/>
            <person name="Semple C.A."/>
            <person name="Seno S."/>
            <person name="Sessa L."/>
            <person name="Sheng Y."/>
            <person name="Shibata Y."/>
            <person name="Shimada H."/>
            <person name="Shimada K."/>
            <person name="Silva D."/>
            <person name="Sinclair B."/>
            <person name="Sperling S."/>
            <person name="Stupka E."/>
            <person name="Sugiura K."/>
            <person name="Sultana R."/>
            <person name="Takenaka Y."/>
            <person name="Taki K."/>
            <person name="Tammoja K."/>
            <person name="Tan S.L."/>
            <person name="Tang S."/>
            <person name="Taylor M.S."/>
            <person name="Tegner J."/>
            <person name="Teichmann S.A."/>
            <person name="Ueda H.R."/>
            <person name="van Nimwegen E."/>
            <person name="Verardo R."/>
            <person name="Wei C.L."/>
            <person name="Yagi K."/>
            <person name="Yamanishi H."/>
            <person name="Zabarovsky E."/>
            <person name="Zhu S."/>
            <person name="Zimmer A."/>
            <person name="Hide W."/>
            <person name="Bult C."/>
            <person name="Grimmond S.M."/>
            <person name="Teasdale R.D."/>
            <person name="Liu E.T."/>
            <person name="Brusic V."/>
            <person name="Quackenbush J."/>
            <person name="Wahlestedt C."/>
            <person name="Mattick J.S."/>
            <person name="Hume D.A."/>
            <person name="Kai C."/>
            <person name="Sasaki D."/>
            <person name="Tomaru Y."/>
            <person name="Fukuda S."/>
            <person name="Kanamori-Katayama M."/>
            <person name="Suzuki M."/>
            <person name="Aoki J."/>
            <person name="Arakawa T."/>
            <person name="Iida J."/>
            <person name="Imamura K."/>
            <person name="Itoh M."/>
            <person name="Kato T."/>
            <person name="Kawaji H."/>
            <person name="Kawagashira N."/>
            <person name="Kawashima T."/>
            <person name="Kojima M."/>
            <person name="Kondo S."/>
            <person name="Konno H."/>
            <person name="Nakano K."/>
            <person name="Ninomiya N."/>
            <person name="Nishio T."/>
            <person name="Okada M."/>
            <person name="Plessy C."/>
            <person name="Shibata K."/>
            <person name="Shiraki T."/>
            <person name="Suzuki S."/>
            <person name="Tagami M."/>
            <person name="Waki K."/>
            <person name="Watahiki A."/>
            <person name="Okamura-Oho Y."/>
            <person name="Suzuki H."/>
            <person name="Kawai J."/>
            <person name="Hayashizaki Y."/>
        </authorList>
    </citation>
    <scope>NUCLEOTIDE SEQUENCE [LARGE SCALE MRNA] OF 1-1108</scope>
    <source>
        <strain>C57BL/6J</strain>
        <tissue>Bone</tissue>
    </source>
</reference>
<reference key="4">
    <citation type="journal article" date="2004" name="Genome Res.">
        <title>The status, quality, and expansion of the NIH full-length cDNA project: the Mammalian Gene Collection (MGC).</title>
        <authorList>
            <consortium name="The MGC Project Team"/>
        </authorList>
    </citation>
    <scope>NUCLEOTIDE SEQUENCE [LARGE SCALE MRNA] OF 1314-1767</scope>
    <source>
        <tissue>Mammary tumor</tissue>
    </source>
</reference>
<reference key="5">
    <citation type="journal article" date="2009" name="Proc. Natl. Acad. Sci. U.S.A.">
        <title>A mouse forward genetics screen identifies LISTERIN as an E3 ubiquitin ligase involved in neurodegeneration.</title>
        <authorList>
            <person name="Chu J."/>
            <person name="Hong N.A."/>
            <person name="Masuda C.A."/>
            <person name="Jenkins B.V."/>
            <person name="Nelms K.A."/>
            <person name="Goodnow C.C."/>
            <person name="Glynne R.J."/>
            <person name="Wu H."/>
            <person name="Masliah E."/>
            <person name="Joazeiro C.A."/>
            <person name="Kay S.A."/>
        </authorList>
    </citation>
    <scope>FUNCTION</scope>
    <scope>CATALYTIC ACTIVITY</scope>
    <scope>PATHWAY</scope>
    <scope>AUTOUBIQUITINATION</scope>
    <scope>TISSUE SPECIFICITY</scope>
    <scope>DISRUPTION PHENOTYPE</scope>
</reference>
<reference key="6">
    <citation type="journal article" date="2010" name="Cell">
        <title>A tissue-specific atlas of mouse protein phosphorylation and expression.</title>
        <authorList>
            <person name="Huttlin E.L."/>
            <person name="Jedrychowski M.P."/>
            <person name="Elias J.E."/>
            <person name="Goswami T."/>
            <person name="Rad R."/>
            <person name="Beausoleil S.A."/>
            <person name="Villen J."/>
            <person name="Haas W."/>
            <person name="Sowa M.E."/>
            <person name="Gygi S.P."/>
        </authorList>
    </citation>
    <scope>IDENTIFICATION BY MASS SPECTROMETRY [LARGE SCALE ANALYSIS]</scope>
    <source>
        <tissue>Brain</tissue>
        <tissue>Heart</tissue>
        <tissue>Kidney</tissue>
        <tissue>Liver</tissue>
        <tissue>Lung</tissue>
        <tissue>Pancreas</tissue>
        <tissue>Spleen</tissue>
        <tissue>Testis</tissue>
    </source>
</reference>
<name>LTN1_MOUSE</name>
<accession>Q6A009</accession>
<accession>E9QN94</accession>
<accession>Q6PIW6</accession>
<accession>Q8BZ44</accession>
<organism>
    <name type="scientific">Mus musculus</name>
    <name type="common">Mouse</name>
    <dbReference type="NCBI Taxonomy" id="10090"/>
    <lineage>
        <taxon>Eukaryota</taxon>
        <taxon>Metazoa</taxon>
        <taxon>Chordata</taxon>
        <taxon>Craniata</taxon>
        <taxon>Vertebrata</taxon>
        <taxon>Euteleostomi</taxon>
        <taxon>Mammalia</taxon>
        <taxon>Eutheria</taxon>
        <taxon>Euarchontoglires</taxon>
        <taxon>Glires</taxon>
        <taxon>Rodentia</taxon>
        <taxon>Myomorpha</taxon>
        <taxon>Muroidea</taxon>
        <taxon>Muridae</taxon>
        <taxon>Murinae</taxon>
        <taxon>Mus</taxon>
        <taxon>Mus</taxon>
    </lineage>
</organism>
<evidence type="ECO:0000250" key="1">
    <source>
        <dbReference type="UniProtKB" id="O94822"/>
    </source>
</evidence>
<evidence type="ECO:0000250" key="2">
    <source>
        <dbReference type="UniProtKB" id="Q04781"/>
    </source>
</evidence>
<evidence type="ECO:0000255" key="3"/>
<evidence type="ECO:0000255" key="4">
    <source>
        <dbReference type="PROSITE-ProRule" id="PRU00175"/>
    </source>
</evidence>
<evidence type="ECO:0000256" key="5">
    <source>
        <dbReference type="SAM" id="MobiDB-lite"/>
    </source>
</evidence>
<evidence type="ECO:0000269" key="6">
    <source>
    </source>
</evidence>
<evidence type="ECO:0000305" key="7"/>
<evidence type="ECO:0000305" key="8">
    <source>
    </source>
</evidence>
<protein>
    <recommendedName>
        <fullName>E3 ubiquitin-protein ligase listerin</fullName>
        <ecNumber evidence="6">2.3.2.27</ecNumber>
    </recommendedName>
    <alternativeName>
        <fullName>RING finger protein 160</fullName>
    </alternativeName>
    <alternativeName>
        <fullName evidence="7">RING-type E3 ubiquitin transferase listerin</fullName>
    </alternativeName>
    <alternativeName>
        <fullName>Zinc finger protein 294</fullName>
        <shortName>Zfp-294</shortName>
    </alternativeName>
</protein>